<organism>
    <name type="scientific">Microcystis aeruginosa (strain NIES-843 / IAM M-2473)</name>
    <dbReference type="NCBI Taxonomy" id="449447"/>
    <lineage>
        <taxon>Bacteria</taxon>
        <taxon>Bacillati</taxon>
        <taxon>Cyanobacteriota</taxon>
        <taxon>Cyanophyceae</taxon>
        <taxon>Oscillatoriophycideae</taxon>
        <taxon>Chroococcales</taxon>
        <taxon>Microcystaceae</taxon>
        <taxon>Microcystis</taxon>
    </lineage>
</organism>
<name>FABZ_MICAN</name>
<proteinExistence type="inferred from homology"/>
<protein>
    <recommendedName>
        <fullName evidence="1">3-hydroxyacyl-[acyl-carrier-protein] dehydratase FabZ</fullName>
        <ecNumber evidence="1">4.2.1.59</ecNumber>
    </recommendedName>
    <alternativeName>
        <fullName evidence="1">(3R)-hydroxymyristoyl-[acyl-carrier-protein] dehydratase</fullName>
        <shortName evidence="1">(3R)-hydroxymyristoyl-ACP dehydrase</shortName>
    </alternativeName>
    <alternativeName>
        <fullName evidence="1">Beta-hydroxyacyl-ACP dehydratase</fullName>
    </alternativeName>
</protein>
<evidence type="ECO:0000255" key="1">
    <source>
        <dbReference type="HAMAP-Rule" id="MF_00406"/>
    </source>
</evidence>
<comment type="function">
    <text evidence="1">Involved in unsaturated fatty acids biosynthesis. Catalyzes the dehydration of short chain beta-hydroxyacyl-ACPs and long chain saturated and unsaturated beta-hydroxyacyl-ACPs.</text>
</comment>
<comment type="catalytic activity">
    <reaction evidence="1">
        <text>a (3R)-hydroxyacyl-[ACP] = a (2E)-enoyl-[ACP] + H2O</text>
        <dbReference type="Rhea" id="RHEA:13097"/>
        <dbReference type="Rhea" id="RHEA-COMP:9925"/>
        <dbReference type="Rhea" id="RHEA-COMP:9945"/>
        <dbReference type="ChEBI" id="CHEBI:15377"/>
        <dbReference type="ChEBI" id="CHEBI:78784"/>
        <dbReference type="ChEBI" id="CHEBI:78827"/>
        <dbReference type="EC" id="4.2.1.59"/>
    </reaction>
</comment>
<comment type="subcellular location">
    <subcellularLocation>
        <location evidence="1">Cytoplasm</location>
    </subcellularLocation>
</comment>
<comment type="similarity">
    <text evidence="1">Belongs to the thioester dehydratase family. FabZ subfamily.</text>
</comment>
<keyword id="KW-0963">Cytoplasm</keyword>
<keyword id="KW-0441">Lipid A biosynthesis</keyword>
<keyword id="KW-0444">Lipid biosynthesis</keyword>
<keyword id="KW-0443">Lipid metabolism</keyword>
<keyword id="KW-0456">Lyase</keyword>
<sequence>MTIVTEALTELEPVIKTTFTVEEIRQLLPHRYPFALVDRIIDYVPGQKAVGLKNVTINEPFFPGHIPNRPLMPGVLIVESMAQVGGVILTQLPGMKGKFFAFAGIDKTRFRRPVVPGDQLIMTVELLSFKMNKIAKMQGEARVDGQLAAQGEMMFSIFD</sequence>
<gene>
    <name evidence="1" type="primary">fabZ</name>
    <name type="ordered locus">MAE_58190</name>
</gene>
<dbReference type="EC" id="4.2.1.59" evidence="1"/>
<dbReference type="EMBL" id="AP009552">
    <property type="protein sequence ID" value="BAG05641.1"/>
    <property type="molecule type" value="Genomic_DNA"/>
</dbReference>
<dbReference type="RefSeq" id="WP_012268022.1">
    <property type="nucleotide sequence ID" value="NC_010296.1"/>
</dbReference>
<dbReference type="SMR" id="B0JIT3"/>
<dbReference type="STRING" id="449447.MAE_58190"/>
<dbReference type="PaxDb" id="449447-MAE_58190"/>
<dbReference type="EnsemblBacteria" id="BAG05641">
    <property type="protein sequence ID" value="BAG05641"/>
    <property type="gene ID" value="MAE_58190"/>
</dbReference>
<dbReference type="GeneID" id="66705437"/>
<dbReference type="KEGG" id="mar:MAE_58190"/>
<dbReference type="eggNOG" id="COG0764">
    <property type="taxonomic scope" value="Bacteria"/>
</dbReference>
<dbReference type="HOGENOM" id="CLU_078912_1_1_3"/>
<dbReference type="BioCyc" id="MAER449447:MAE_RS25380-MONOMER"/>
<dbReference type="Proteomes" id="UP000001510">
    <property type="component" value="Chromosome"/>
</dbReference>
<dbReference type="GO" id="GO:0005737">
    <property type="term" value="C:cytoplasm"/>
    <property type="evidence" value="ECO:0007669"/>
    <property type="project" value="UniProtKB-SubCell"/>
</dbReference>
<dbReference type="GO" id="GO:0016020">
    <property type="term" value="C:membrane"/>
    <property type="evidence" value="ECO:0007669"/>
    <property type="project" value="GOC"/>
</dbReference>
<dbReference type="GO" id="GO:0019171">
    <property type="term" value="F:(3R)-hydroxyacyl-[acyl-carrier-protein] dehydratase activity"/>
    <property type="evidence" value="ECO:0007669"/>
    <property type="project" value="UniProtKB-EC"/>
</dbReference>
<dbReference type="GO" id="GO:0006633">
    <property type="term" value="P:fatty acid biosynthetic process"/>
    <property type="evidence" value="ECO:0007669"/>
    <property type="project" value="UniProtKB-UniRule"/>
</dbReference>
<dbReference type="GO" id="GO:0009245">
    <property type="term" value="P:lipid A biosynthetic process"/>
    <property type="evidence" value="ECO:0007669"/>
    <property type="project" value="UniProtKB-UniRule"/>
</dbReference>
<dbReference type="CDD" id="cd01288">
    <property type="entry name" value="FabZ"/>
    <property type="match status" value="1"/>
</dbReference>
<dbReference type="FunFam" id="3.10.129.10:FF:000001">
    <property type="entry name" value="3-hydroxyacyl-[acyl-carrier-protein] dehydratase FabZ"/>
    <property type="match status" value="1"/>
</dbReference>
<dbReference type="Gene3D" id="3.10.129.10">
    <property type="entry name" value="Hotdog Thioesterase"/>
    <property type="match status" value="1"/>
</dbReference>
<dbReference type="HAMAP" id="MF_00406">
    <property type="entry name" value="FabZ"/>
    <property type="match status" value="1"/>
</dbReference>
<dbReference type="InterPro" id="IPR013114">
    <property type="entry name" value="FabA_FabZ"/>
</dbReference>
<dbReference type="InterPro" id="IPR010084">
    <property type="entry name" value="FabZ"/>
</dbReference>
<dbReference type="InterPro" id="IPR029069">
    <property type="entry name" value="HotDog_dom_sf"/>
</dbReference>
<dbReference type="NCBIfam" id="TIGR01750">
    <property type="entry name" value="fabZ"/>
    <property type="match status" value="1"/>
</dbReference>
<dbReference type="NCBIfam" id="NF000582">
    <property type="entry name" value="PRK00006.1"/>
    <property type="match status" value="1"/>
</dbReference>
<dbReference type="PANTHER" id="PTHR30272">
    <property type="entry name" value="3-HYDROXYACYL-[ACYL-CARRIER-PROTEIN] DEHYDRATASE"/>
    <property type="match status" value="1"/>
</dbReference>
<dbReference type="PANTHER" id="PTHR30272:SF1">
    <property type="entry name" value="3-HYDROXYACYL-[ACYL-CARRIER-PROTEIN] DEHYDRATASE"/>
    <property type="match status" value="1"/>
</dbReference>
<dbReference type="Pfam" id="PF07977">
    <property type="entry name" value="FabA"/>
    <property type="match status" value="1"/>
</dbReference>
<dbReference type="SUPFAM" id="SSF54637">
    <property type="entry name" value="Thioesterase/thiol ester dehydrase-isomerase"/>
    <property type="match status" value="1"/>
</dbReference>
<accession>B0JIT3</accession>
<reference key="1">
    <citation type="journal article" date="2007" name="DNA Res.">
        <title>Complete genomic structure of the bloom-forming toxic cyanobacterium Microcystis aeruginosa NIES-843.</title>
        <authorList>
            <person name="Kaneko T."/>
            <person name="Nakajima N."/>
            <person name="Okamoto S."/>
            <person name="Suzuki I."/>
            <person name="Tanabe Y."/>
            <person name="Tamaoki M."/>
            <person name="Nakamura Y."/>
            <person name="Kasai F."/>
            <person name="Watanabe A."/>
            <person name="Kawashima K."/>
            <person name="Kishida Y."/>
            <person name="Ono A."/>
            <person name="Shimizu Y."/>
            <person name="Takahashi C."/>
            <person name="Minami C."/>
            <person name="Fujishiro T."/>
            <person name="Kohara M."/>
            <person name="Katoh M."/>
            <person name="Nakazaki N."/>
            <person name="Nakayama S."/>
            <person name="Yamada M."/>
            <person name="Tabata S."/>
            <person name="Watanabe M.M."/>
        </authorList>
    </citation>
    <scope>NUCLEOTIDE SEQUENCE [LARGE SCALE GENOMIC DNA]</scope>
    <source>
        <strain>NIES-843 / IAM M-247</strain>
    </source>
</reference>
<feature type="chain" id="PRO_0000340789" description="3-hydroxyacyl-[acyl-carrier-protein] dehydratase FabZ">
    <location>
        <begin position="1"/>
        <end position="159"/>
    </location>
</feature>
<feature type="active site" evidence="1">
    <location>
        <position position="65"/>
    </location>
</feature>